<protein>
    <recommendedName>
        <fullName evidence="1">Small ribosomal subunit protein uS19</fullName>
    </recommendedName>
    <alternativeName>
        <fullName evidence="2">30S ribosomal protein S19</fullName>
    </alternativeName>
</protein>
<keyword id="KW-1185">Reference proteome</keyword>
<keyword id="KW-0687">Ribonucleoprotein</keyword>
<keyword id="KW-0689">Ribosomal protein</keyword>
<keyword id="KW-0694">RNA-binding</keyword>
<keyword id="KW-0699">rRNA-binding</keyword>
<comment type="function">
    <text evidence="1">Protein S19 forms a complex with S13 that binds strongly to the 16S ribosomal RNA.</text>
</comment>
<comment type="similarity">
    <text evidence="1">Belongs to the universal ribosomal protein uS19 family.</text>
</comment>
<evidence type="ECO:0000255" key="1">
    <source>
        <dbReference type="HAMAP-Rule" id="MF_00531"/>
    </source>
</evidence>
<evidence type="ECO:0000305" key="2"/>
<organism>
    <name type="scientific">Korarchaeum cryptofilum (strain OPF8)</name>
    <dbReference type="NCBI Taxonomy" id="374847"/>
    <lineage>
        <taxon>Archaea</taxon>
        <taxon>Thermoproteota</taxon>
        <taxon>Candidatus Korarchaeia</taxon>
        <taxon>Candidatus Korarchaeales</taxon>
        <taxon>Candidatus Korarchaeaceae</taxon>
        <taxon>Candidatus Korarchaeum</taxon>
    </lineage>
</organism>
<feature type="chain" id="PRO_0000354312" description="Small ribosomal subunit protein uS19">
    <location>
        <begin position="1"/>
        <end position="132"/>
    </location>
</feature>
<accession>B1L708</accession>
<proteinExistence type="inferred from homology"/>
<dbReference type="EMBL" id="CP000968">
    <property type="protein sequence ID" value="ACB08237.1"/>
    <property type="molecule type" value="Genomic_DNA"/>
</dbReference>
<dbReference type="RefSeq" id="WP_012310134.1">
    <property type="nucleotide sequence ID" value="NC_010482.1"/>
</dbReference>
<dbReference type="SMR" id="B1L708"/>
<dbReference type="FunCoup" id="B1L708">
    <property type="interactions" value="153"/>
</dbReference>
<dbReference type="STRING" id="374847.Kcr_1491"/>
<dbReference type="EnsemblBacteria" id="ACB08237">
    <property type="protein sequence ID" value="ACB08237"/>
    <property type="gene ID" value="Kcr_1491"/>
</dbReference>
<dbReference type="GeneID" id="6094768"/>
<dbReference type="KEGG" id="kcr:Kcr_1491"/>
<dbReference type="eggNOG" id="arCOG04099">
    <property type="taxonomic scope" value="Archaea"/>
</dbReference>
<dbReference type="HOGENOM" id="CLU_097347_1_0_2"/>
<dbReference type="InParanoid" id="B1L708"/>
<dbReference type="OrthoDB" id="30559at2157"/>
<dbReference type="PhylomeDB" id="B1L708"/>
<dbReference type="Proteomes" id="UP000001686">
    <property type="component" value="Chromosome"/>
</dbReference>
<dbReference type="GO" id="GO:0022627">
    <property type="term" value="C:cytosolic small ribosomal subunit"/>
    <property type="evidence" value="ECO:0000318"/>
    <property type="project" value="GO_Central"/>
</dbReference>
<dbReference type="GO" id="GO:0019843">
    <property type="term" value="F:rRNA binding"/>
    <property type="evidence" value="ECO:0007669"/>
    <property type="project" value="UniProtKB-UniRule"/>
</dbReference>
<dbReference type="GO" id="GO:0003735">
    <property type="term" value="F:structural constituent of ribosome"/>
    <property type="evidence" value="ECO:0000318"/>
    <property type="project" value="GO_Central"/>
</dbReference>
<dbReference type="GO" id="GO:0000028">
    <property type="term" value="P:ribosomal small subunit assembly"/>
    <property type="evidence" value="ECO:0000318"/>
    <property type="project" value="GO_Central"/>
</dbReference>
<dbReference type="GO" id="GO:0006412">
    <property type="term" value="P:translation"/>
    <property type="evidence" value="ECO:0007669"/>
    <property type="project" value="UniProtKB-UniRule"/>
</dbReference>
<dbReference type="FunFam" id="3.30.860.10:FF:000002">
    <property type="entry name" value="40S ribosomal protein S15"/>
    <property type="match status" value="1"/>
</dbReference>
<dbReference type="Gene3D" id="3.30.860.10">
    <property type="entry name" value="30s Ribosomal Protein S19, Chain A"/>
    <property type="match status" value="1"/>
</dbReference>
<dbReference type="HAMAP" id="MF_00531">
    <property type="entry name" value="Ribosomal_uS19"/>
    <property type="match status" value="1"/>
</dbReference>
<dbReference type="InterPro" id="IPR002222">
    <property type="entry name" value="Ribosomal_uS19"/>
</dbReference>
<dbReference type="InterPro" id="IPR020934">
    <property type="entry name" value="Ribosomal_uS19_CS"/>
</dbReference>
<dbReference type="InterPro" id="IPR005713">
    <property type="entry name" value="Ribosomal_uS19_euk/arc"/>
</dbReference>
<dbReference type="InterPro" id="IPR023575">
    <property type="entry name" value="Ribosomal_uS19_SF"/>
</dbReference>
<dbReference type="NCBIfam" id="NF003121">
    <property type="entry name" value="PRK04038.1"/>
    <property type="match status" value="1"/>
</dbReference>
<dbReference type="NCBIfam" id="TIGR01025">
    <property type="entry name" value="uS19_arch"/>
    <property type="match status" value="1"/>
</dbReference>
<dbReference type="PANTHER" id="PTHR11880">
    <property type="entry name" value="RIBOSOMAL PROTEIN S19P FAMILY MEMBER"/>
    <property type="match status" value="1"/>
</dbReference>
<dbReference type="PANTHER" id="PTHR11880:SF2">
    <property type="entry name" value="SMALL RIBOSOMAL SUBUNIT PROTEIN US19"/>
    <property type="match status" value="1"/>
</dbReference>
<dbReference type="Pfam" id="PF00203">
    <property type="entry name" value="Ribosomal_S19"/>
    <property type="match status" value="1"/>
</dbReference>
<dbReference type="PIRSF" id="PIRSF002144">
    <property type="entry name" value="Ribosomal_S19"/>
    <property type="match status" value="1"/>
</dbReference>
<dbReference type="PRINTS" id="PR00975">
    <property type="entry name" value="RIBOSOMALS19"/>
</dbReference>
<dbReference type="SUPFAM" id="SSF54570">
    <property type="entry name" value="Ribosomal protein S19"/>
    <property type="match status" value="1"/>
</dbReference>
<dbReference type="PROSITE" id="PS00323">
    <property type="entry name" value="RIBOSOMAL_S19"/>
    <property type="match status" value="1"/>
</dbReference>
<gene>
    <name evidence="1" type="primary">rps19</name>
    <name type="ordered locus">Kcr_1491</name>
</gene>
<name>RS19_KORCO</name>
<reference key="1">
    <citation type="journal article" date="2008" name="Proc. Natl. Acad. Sci. U.S.A.">
        <title>A korarchaeal genome reveals new insights into the evolution of the Archaea.</title>
        <authorList>
            <person name="Elkins J.G."/>
            <person name="Podar M."/>
            <person name="Graham D.E."/>
            <person name="Makarova K.S."/>
            <person name="Wolf Y."/>
            <person name="Randau L."/>
            <person name="Hedlund B.P."/>
            <person name="Brochier-Armanet C."/>
            <person name="Kunin V."/>
            <person name="Anderson I."/>
            <person name="Lapidus A."/>
            <person name="Goltsman E."/>
            <person name="Barry K."/>
            <person name="Koonin E.V."/>
            <person name="Hugenholtz P."/>
            <person name="Kyrpides N."/>
            <person name="Wanner G."/>
            <person name="Richardson P."/>
            <person name="Keller M."/>
            <person name="Stetter K.O."/>
        </authorList>
    </citation>
    <scope>NUCLEOTIDE SEQUENCE [LARGE SCALE GENOMIC DNA]</scope>
    <source>
        <strain>OPF8</strain>
    </source>
</reference>
<sequence length="132" mass="15255">MSSREFRYRGYTLEQLQTMTLDELANVMPSRIRRTLKRGLSIENKKLLDKIRKYKAMGIDKVIRTHRRDMPILPEMVGSKIAVHNGKEFVEITIVPEMIGHYLGEFAMTNRIVRHGKPGKGATRSSKFVPLK</sequence>